<evidence type="ECO:0000255" key="1">
    <source>
        <dbReference type="HAMAP-Rule" id="MF_00262"/>
    </source>
</evidence>
<evidence type="ECO:0000256" key="2">
    <source>
        <dbReference type="SAM" id="MobiDB-lite"/>
    </source>
</evidence>
<protein>
    <recommendedName>
        <fullName evidence="1">Cell division topological specificity factor</fullName>
    </recommendedName>
</protein>
<accession>B0V8Z5</accession>
<dbReference type="EMBL" id="CU459141">
    <property type="protein sequence ID" value="CAM87758.1"/>
    <property type="molecule type" value="Genomic_DNA"/>
</dbReference>
<dbReference type="RefSeq" id="WP_000896934.1">
    <property type="nucleotide sequence ID" value="NZ_JBDGFB010000015.1"/>
</dbReference>
<dbReference type="EnsemblBacteria" id="CAM87758">
    <property type="protein sequence ID" value="CAM87758"/>
    <property type="gene ID" value="ABAYE2936"/>
</dbReference>
<dbReference type="GeneID" id="9383489"/>
<dbReference type="KEGG" id="aby:ABAYE2936"/>
<dbReference type="HOGENOM" id="CLU_137929_2_3_6"/>
<dbReference type="GO" id="GO:0051301">
    <property type="term" value="P:cell division"/>
    <property type="evidence" value="ECO:0007669"/>
    <property type="project" value="UniProtKB-KW"/>
</dbReference>
<dbReference type="GO" id="GO:0032955">
    <property type="term" value="P:regulation of division septum assembly"/>
    <property type="evidence" value="ECO:0007669"/>
    <property type="project" value="InterPro"/>
</dbReference>
<dbReference type="Gene3D" id="3.30.1070.10">
    <property type="entry name" value="Cell division topological specificity factor MinE"/>
    <property type="match status" value="1"/>
</dbReference>
<dbReference type="HAMAP" id="MF_00262">
    <property type="entry name" value="MinE"/>
    <property type="match status" value="1"/>
</dbReference>
<dbReference type="InterPro" id="IPR005527">
    <property type="entry name" value="MinE"/>
</dbReference>
<dbReference type="InterPro" id="IPR036707">
    <property type="entry name" value="MinE_sf"/>
</dbReference>
<dbReference type="NCBIfam" id="TIGR01215">
    <property type="entry name" value="minE"/>
    <property type="match status" value="1"/>
</dbReference>
<dbReference type="NCBIfam" id="NF001422">
    <property type="entry name" value="PRK00296.1"/>
    <property type="match status" value="1"/>
</dbReference>
<dbReference type="Pfam" id="PF03776">
    <property type="entry name" value="MinE"/>
    <property type="match status" value="1"/>
</dbReference>
<dbReference type="SUPFAM" id="SSF55229">
    <property type="entry name" value="Cell division protein MinE topological specificity domain"/>
    <property type="match status" value="1"/>
</dbReference>
<proteinExistence type="inferred from homology"/>
<keyword id="KW-0131">Cell cycle</keyword>
<keyword id="KW-0132">Cell division</keyword>
<comment type="function">
    <text evidence="1">Prevents the cell division inhibition by proteins MinC and MinD at internal division sites while permitting inhibition at polar sites. This ensures cell division at the proper site by restricting the formation of a division septum at the midpoint of the long axis of the cell.</text>
</comment>
<comment type="similarity">
    <text evidence="1">Belongs to the MinE family.</text>
</comment>
<feature type="chain" id="PRO_1000114197" description="Cell division topological specificity factor">
    <location>
        <begin position="1"/>
        <end position="90"/>
    </location>
</feature>
<feature type="region of interest" description="Disordered" evidence="2">
    <location>
        <begin position="1"/>
        <end position="21"/>
    </location>
</feature>
<feature type="compositionally biased region" description="Basic and acidic residues" evidence="2">
    <location>
        <begin position="10"/>
        <end position="21"/>
    </location>
</feature>
<sequence length="90" mass="10283">MAGFWSKLFSSEEKPSSAQTAKDRLKVIVASEQGLGRRLSQDKIDQMKKEIMQVVSRYVSGVGEQHIQMQVRSEANIEMLEMNINLPEER</sequence>
<name>MINE_ACIBY</name>
<reference key="1">
    <citation type="journal article" date="2008" name="PLoS ONE">
        <title>Comparative analysis of Acinetobacters: three genomes for three lifestyles.</title>
        <authorList>
            <person name="Vallenet D."/>
            <person name="Nordmann P."/>
            <person name="Barbe V."/>
            <person name="Poirel L."/>
            <person name="Mangenot S."/>
            <person name="Bataille E."/>
            <person name="Dossat C."/>
            <person name="Gas S."/>
            <person name="Kreimeyer A."/>
            <person name="Lenoble P."/>
            <person name="Oztas S."/>
            <person name="Poulain J."/>
            <person name="Segurens B."/>
            <person name="Robert C."/>
            <person name="Abergel C."/>
            <person name="Claverie J.-M."/>
            <person name="Raoult D."/>
            <person name="Medigue C."/>
            <person name="Weissenbach J."/>
            <person name="Cruveiller S."/>
        </authorList>
    </citation>
    <scope>NUCLEOTIDE SEQUENCE [LARGE SCALE GENOMIC DNA]</scope>
    <source>
        <strain>AYE</strain>
    </source>
</reference>
<gene>
    <name evidence="1" type="primary">minE</name>
    <name type="ordered locus">ABAYE2936</name>
</gene>
<organism>
    <name type="scientific">Acinetobacter baumannii (strain AYE)</name>
    <dbReference type="NCBI Taxonomy" id="509173"/>
    <lineage>
        <taxon>Bacteria</taxon>
        <taxon>Pseudomonadati</taxon>
        <taxon>Pseudomonadota</taxon>
        <taxon>Gammaproteobacteria</taxon>
        <taxon>Moraxellales</taxon>
        <taxon>Moraxellaceae</taxon>
        <taxon>Acinetobacter</taxon>
        <taxon>Acinetobacter calcoaceticus/baumannii complex</taxon>
    </lineage>
</organism>